<evidence type="ECO:0000255" key="1">
    <source>
        <dbReference type="HAMAP-Rule" id="MF_00815"/>
    </source>
</evidence>
<keyword id="KW-0066">ATP synthesis</keyword>
<keyword id="KW-1003">Cell membrane</keyword>
<keyword id="KW-0139">CF(1)</keyword>
<keyword id="KW-0375">Hydrogen ion transport</keyword>
<keyword id="KW-0406">Ion transport</keyword>
<keyword id="KW-0472">Membrane</keyword>
<keyword id="KW-1185">Reference proteome</keyword>
<keyword id="KW-0813">Transport</keyword>
<dbReference type="EMBL" id="CP000854">
    <property type="protein sequence ID" value="ACC42495.1"/>
    <property type="molecule type" value="Genomic_DNA"/>
</dbReference>
<dbReference type="RefSeq" id="WP_012395671.1">
    <property type="nucleotide sequence ID" value="NC_010612.1"/>
</dbReference>
<dbReference type="SMR" id="B2HQK3"/>
<dbReference type="STRING" id="216594.MMAR_4088"/>
<dbReference type="KEGG" id="mmi:MMAR_4088"/>
<dbReference type="eggNOG" id="COG0224">
    <property type="taxonomic scope" value="Bacteria"/>
</dbReference>
<dbReference type="HOGENOM" id="CLU_050669_0_0_11"/>
<dbReference type="OrthoDB" id="9812769at2"/>
<dbReference type="Proteomes" id="UP000001190">
    <property type="component" value="Chromosome"/>
</dbReference>
<dbReference type="GO" id="GO:0005886">
    <property type="term" value="C:plasma membrane"/>
    <property type="evidence" value="ECO:0007669"/>
    <property type="project" value="UniProtKB-SubCell"/>
</dbReference>
<dbReference type="GO" id="GO:0045259">
    <property type="term" value="C:proton-transporting ATP synthase complex"/>
    <property type="evidence" value="ECO:0007669"/>
    <property type="project" value="UniProtKB-KW"/>
</dbReference>
<dbReference type="GO" id="GO:0005524">
    <property type="term" value="F:ATP binding"/>
    <property type="evidence" value="ECO:0007669"/>
    <property type="project" value="UniProtKB-UniRule"/>
</dbReference>
<dbReference type="GO" id="GO:0046933">
    <property type="term" value="F:proton-transporting ATP synthase activity, rotational mechanism"/>
    <property type="evidence" value="ECO:0007669"/>
    <property type="project" value="UniProtKB-UniRule"/>
</dbReference>
<dbReference type="GO" id="GO:0042777">
    <property type="term" value="P:proton motive force-driven plasma membrane ATP synthesis"/>
    <property type="evidence" value="ECO:0007669"/>
    <property type="project" value="UniProtKB-UniRule"/>
</dbReference>
<dbReference type="CDD" id="cd12151">
    <property type="entry name" value="F1-ATPase_gamma"/>
    <property type="match status" value="1"/>
</dbReference>
<dbReference type="Gene3D" id="3.40.1380.10">
    <property type="match status" value="1"/>
</dbReference>
<dbReference type="Gene3D" id="1.10.287.80">
    <property type="entry name" value="ATP synthase, gamma subunit, helix hairpin domain"/>
    <property type="match status" value="1"/>
</dbReference>
<dbReference type="HAMAP" id="MF_00815">
    <property type="entry name" value="ATP_synth_gamma_bact"/>
    <property type="match status" value="1"/>
</dbReference>
<dbReference type="InterPro" id="IPR035968">
    <property type="entry name" value="ATP_synth_F1_ATPase_gsu"/>
</dbReference>
<dbReference type="InterPro" id="IPR000131">
    <property type="entry name" value="ATP_synth_F1_gsu"/>
</dbReference>
<dbReference type="InterPro" id="IPR023632">
    <property type="entry name" value="ATP_synth_F1_gsu_CS"/>
</dbReference>
<dbReference type="NCBIfam" id="TIGR01146">
    <property type="entry name" value="ATPsyn_F1gamma"/>
    <property type="match status" value="1"/>
</dbReference>
<dbReference type="NCBIfam" id="NF004145">
    <property type="entry name" value="PRK05621.1-2"/>
    <property type="match status" value="1"/>
</dbReference>
<dbReference type="PANTHER" id="PTHR11693">
    <property type="entry name" value="ATP SYNTHASE GAMMA CHAIN"/>
    <property type="match status" value="1"/>
</dbReference>
<dbReference type="PANTHER" id="PTHR11693:SF22">
    <property type="entry name" value="ATP SYNTHASE SUBUNIT GAMMA, MITOCHONDRIAL"/>
    <property type="match status" value="1"/>
</dbReference>
<dbReference type="Pfam" id="PF00231">
    <property type="entry name" value="ATP-synt"/>
    <property type="match status" value="1"/>
</dbReference>
<dbReference type="PRINTS" id="PR00126">
    <property type="entry name" value="ATPASEGAMMA"/>
</dbReference>
<dbReference type="SUPFAM" id="SSF52943">
    <property type="entry name" value="ATP synthase (F1-ATPase), gamma subunit"/>
    <property type="match status" value="1"/>
</dbReference>
<dbReference type="PROSITE" id="PS00153">
    <property type="entry name" value="ATPASE_GAMMA"/>
    <property type="match status" value="1"/>
</dbReference>
<protein>
    <recommendedName>
        <fullName evidence="1">ATP synthase gamma chain</fullName>
    </recommendedName>
    <alternativeName>
        <fullName evidence="1">ATP synthase F1 sector gamma subunit</fullName>
    </alternativeName>
    <alternativeName>
        <fullName evidence="1">F-ATPase gamma subunit</fullName>
    </alternativeName>
</protein>
<organism>
    <name type="scientific">Mycobacterium marinum (strain ATCC BAA-535 / M)</name>
    <dbReference type="NCBI Taxonomy" id="216594"/>
    <lineage>
        <taxon>Bacteria</taxon>
        <taxon>Bacillati</taxon>
        <taxon>Actinomycetota</taxon>
        <taxon>Actinomycetes</taxon>
        <taxon>Mycobacteriales</taxon>
        <taxon>Mycobacteriaceae</taxon>
        <taxon>Mycobacterium</taxon>
        <taxon>Mycobacterium ulcerans group</taxon>
    </lineage>
</organism>
<comment type="function">
    <text evidence="1">Produces ATP from ADP in the presence of a proton gradient across the membrane. The gamma chain is believed to be important in regulating ATPase activity and the flow of protons through the CF(0) complex.</text>
</comment>
<comment type="subunit">
    <text evidence="1">F-type ATPases have 2 components, CF(1) - the catalytic core - and CF(0) - the membrane proton channel. CF(1) has five subunits: alpha(3), beta(3), gamma(1), delta(1), epsilon(1). CF(0) has three main subunits: a, b and c.</text>
</comment>
<comment type="subcellular location">
    <subcellularLocation>
        <location evidence="1">Cell membrane</location>
        <topology evidence="1">Peripheral membrane protein</topology>
    </subcellularLocation>
</comment>
<comment type="similarity">
    <text evidence="1">Belongs to the ATPase gamma chain family.</text>
</comment>
<gene>
    <name evidence="1" type="primary">atpG</name>
    <name type="ordered locus">MMAR_4088</name>
</gene>
<proteinExistence type="inferred from homology"/>
<accession>B2HQK3</accession>
<name>ATPG_MYCMM</name>
<reference key="1">
    <citation type="journal article" date="2008" name="Genome Res.">
        <title>Insights from the complete genome sequence of Mycobacterium marinum on the evolution of Mycobacterium tuberculosis.</title>
        <authorList>
            <person name="Stinear T.P."/>
            <person name="Seemann T."/>
            <person name="Harrison P.F."/>
            <person name="Jenkin G.A."/>
            <person name="Davies J.K."/>
            <person name="Johnson P.D."/>
            <person name="Abdellah Z."/>
            <person name="Arrowsmith C."/>
            <person name="Chillingworth T."/>
            <person name="Churcher C."/>
            <person name="Clarke K."/>
            <person name="Cronin A."/>
            <person name="Davis P."/>
            <person name="Goodhead I."/>
            <person name="Holroyd N."/>
            <person name="Jagels K."/>
            <person name="Lord A."/>
            <person name="Moule S."/>
            <person name="Mungall K."/>
            <person name="Norbertczak H."/>
            <person name="Quail M.A."/>
            <person name="Rabbinowitsch E."/>
            <person name="Walker D."/>
            <person name="White B."/>
            <person name="Whitehead S."/>
            <person name="Small P.L."/>
            <person name="Brosch R."/>
            <person name="Ramakrishnan L."/>
            <person name="Fischbach M.A."/>
            <person name="Parkhill J."/>
            <person name="Cole S.T."/>
        </authorList>
    </citation>
    <scope>NUCLEOTIDE SEQUENCE [LARGE SCALE GENOMIC DNA]</scope>
    <source>
        <strain>ATCC BAA-535 / M</strain>
    </source>
</reference>
<sequence>MAATLRELRGRIRSAGSIKKITKAQELIATSRIARAQARLESARPYADQITQMLTTLAADAALDHPLLVEHPQPKRAGVLVVSSDRGLCGAYNANVFRRSEELFSLLRDEGKQPVLYVVGRKALAYYTFRNWDIAQSWTGFSEQPKYENAAEIASTLVDAFMLGAGEGEDQQTNNEQSVDELHIVFTEFKSMLSQSTEARRMAPMVVEYVEETGPRTLYSFEPDATTLFESLLPRYLTTRVYAAMLESAASELASRQRAMKSATDNADDLIKALTLMANRERQAQITQEISEIVGGANALADAR</sequence>
<feature type="chain" id="PRO_1000134181" description="ATP synthase gamma chain">
    <location>
        <begin position="1"/>
        <end position="304"/>
    </location>
</feature>